<comment type="function">
    <text evidence="1">H(+)-stimulated, divalent metal cation uptake system.</text>
</comment>
<comment type="subcellular location">
    <subcellularLocation>
        <location evidence="1">Cell inner membrane</location>
        <topology evidence="1">Multi-pass membrane protein</topology>
    </subcellularLocation>
</comment>
<comment type="similarity">
    <text evidence="1">Belongs to the NRAMP family.</text>
</comment>
<gene>
    <name evidence="1" type="primary">mntH</name>
    <name type="ordered locus">Csal_0868</name>
</gene>
<protein>
    <recommendedName>
        <fullName evidence="1">Divalent metal cation transporter MntH</fullName>
    </recommendedName>
</protein>
<keyword id="KW-0997">Cell inner membrane</keyword>
<keyword id="KW-1003">Cell membrane</keyword>
<keyword id="KW-0406">Ion transport</keyword>
<keyword id="KW-0472">Membrane</keyword>
<keyword id="KW-1185">Reference proteome</keyword>
<keyword id="KW-0769">Symport</keyword>
<keyword id="KW-0812">Transmembrane</keyword>
<keyword id="KW-1133">Transmembrane helix</keyword>
<keyword id="KW-0813">Transport</keyword>
<reference key="1">
    <citation type="journal article" date="2011" name="Stand. Genomic Sci.">
        <title>Complete genome sequence of the halophilic and highly halotolerant Chromohalobacter salexigens type strain (1H11(T)).</title>
        <authorList>
            <person name="Copeland A."/>
            <person name="O'Connor K."/>
            <person name="Lucas S."/>
            <person name="Lapidus A."/>
            <person name="Berry K.W."/>
            <person name="Detter J.C."/>
            <person name="Del Rio T.G."/>
            <person name="Hammon N."/>
            <person name="Dalin E."/>
            <person name="Tice H."/>
            <person name="Pitluck S."/>
            <person name="Bruce D."/>
            <person name="Goodwin L."/>
            <person name="Han C."/>
            <person name="Tapia R."/>
            <person name="Saunders E."/>
            <person name="Schmutz J."/>
            <person name="Brettin T."/>
            <person name="Larimer F."/>
            <person name="Land M."/>
            <person name="Hauser L."/>
            <person name="Vargas C."/>
            <person name="Nieto J.J."/>
            <person name="Kyrpides N.C."/>
            <person name="Ivanova N."/>
            <person name="Goker M."/>
            <person name="Klenk H.P."/>
            <person name="Csonka L.N."/>
            <person name="Woyke T."/>
        </authorList>
    </citation>
    <scope>NUCLEOTIDE SEQUENCE [LARGE SCALE GENOMIC DNA]</scope>
    <source>
        <strain>ATCC BAA-138 / DSM 3043 / CIP 106854 / NCIMB 13768 / 1H11</strain>
    </source>
</reference>
<sequence length="431" mass="46386">MRTGSMLRTISDSAIRDQAASTLSGKPRRWSWTAFFGPALIAAVAYIDPGNFATNIEAGSRYGYTLLWVVLAANLMAMLIQTLSARLGLATGQNLPQVIRARYPRPLVWCYWVQAEIVAIATDLAEFLGAALAFHLLFGLSLMEGALLTGTITYLALHLYRYGFRLMEILIGAMILAVAGGFILELVLSRPEPAPLLKGLLIPGFPDGYALYLAAGILGATVMPHVIYLHSALSQQRIQVKDDAHRLRLMRYYRLDVILGMAIAGLVNLSMLAMAAAVFHATGRLDVATISDSYLLLAPVVGQVTASHVFGLALLLAGLSSSIVGTLSGQVIMQGFVNVSIPLWLRRLVTMLPALAVIMLGISEQKALVASQVILSFGIPFALVPLLCFTANRQIMGNLVNRKSVTGVGTVVCTLIVALNVYVLFSTFTGH</sequence>
<organism>
    <name type="scientific">Chromohalobacter salexigens (strain ATCC BAA-138 / DSM 3043 / CIP 106854 / NCIMB 13768 / 1H11)</name>
    <dbReference type="NCBI Taxonomy" id="290398"/>
    <lineage>
        <taxon>Bacteria</taxon>
        <taxon>Pseudomonadati</taxon>
        <taxon>Pseudomonadota</taxon>
        <taxon>Gammaproteobacteria</taxon>
        <taxon>Oceanospirillales</taxon>
        <taxon>Halomonadaceae</taxon>
        <taxon>Chromohalobacter</taxon>
    </lineage>
</organism>
<feature type="chain" id="PRO_0000325602" description="Divalent metal cation transporter MntH">
    <location>
        <begin position="1"/>
        <end position="431"/>
    </location>
</feature>
<feature type="transmembrane region" description="Helical" evidence="1">
    <location>
        <begin position="30"/>
        <end position="50"/>
    </location>
</feature>
<feature type="transmembrane region" description="Helical" evidence="1">
    <location>
        <begin position="63"/>
        <end position="83"/>
    </location>
</feature>
<feature type="transmembrane region" description="Helical" evidence="1">
    <location>
        <begin position="106"/>
        <end position="126"/>
    </location>
</feature>
<feature type="transmembrane region" description="Helical" evidence="1">
    <location>
        <begin position="137"/>
        <end position="159"/>
    </location>
</feature>
<feature type="transmembrane region" description="Helical" evidence="1">
    <location>
        <begin position="169"/>
        <end position="189"/>
    </location>
</feature>
<feature type="transmembrane region" description="Helical" evidence="1">
    <location>
        <begin position="209"/>
        <end position="229"/>
    </location>
</feature>
<feature type="transmembrane region" description="Helical" evidence="1">
    <location>
        <begin position="257"/>
        <end position="277"/>
    </location>
</feature>
<feature type="transmembrane region" description="Helical" evidence="1">
    <location>
        <begin position="287"/>
        <end position="307"/>
    </location>
</feature>
<feature type="transmembrane region" description="Helical" evidence="1">
    <location>
        <begin position="309"/>
        <end position="329"/>
    </location>
</feature>
<feature type="transmembrane region" description="Helical" evidence="1">
    <location>
        <begin position="341"/>
        <end position="361"/>
    </location>
</feature>
<feature type="transmembrane region" description="Helical" evidence="1">
    <location>
        <begin position="367"/>
        <end position="387"/>
    </location>
</feature>
<feature type="transmembrane region" description="Helical" evidence="1">
    <location>
        <begin position="405"/>
        <end position="425"/>
    </location>
</feature>
<evidence type="ECO:0000255" key="1">
    <source>
        <dbReference type="HAMAP-Rule" id="MF_00221"/>
    </source>
</evidence>
<proteinExistence type="inferred from homology"/>
<name>MNTH_CHRSD</name>
<accession>Q1QZ83</accession>
<dbReference type="EMBL" id="CP000285">
    <property type="protein sequence ID" value="ABE58225.1"/>
    <property type="molecule type" value="Genomic_DNA"/>
</dbReference>
<dbReference type="SMR" id="Q1QZ83"/>
<dbReference type="STRING" id="290398.Csal_0868"/>
<dbReference type="KEGG" id="csa:Csal_0868"/>
<dbReference type="eggNOG" id="COG1914">
    <property type="taxonomic scope" value="Bacteria"/>
</dbReference>
<dbReference type="HOGENOM" id="CLU_020088_2_0_6"/>
<dbReference type="OrthoDB" id="9787548at2"/>
<dbReference type="Proteomes" id="UP000000239">
    <property type="component" value="Chromosome"/>
</dbReference>
<dbReference type="GO" id="GO:0005886">
    <property type="term" value="C:plasma membrane"/>
    <property type="evidence" value="ECO:0007669"/>
    <property type="project" value="UniProtKB-SubCell"/>
</dbReference>
<dbReference type="GO" id="GO:0015086">
    <property type="term" value="F:cadmium ion transmembrane transporter activity"/>
    <property type="evidence" value="ECO:0007669"/>
    <property type="project" value="TreeGrafter"/>
</dbReference>
<dbReference type="GO" id="GO:0005384">
    <property type="term" value="F:manganese ion transmembrane transporter activity"/>
    <property type="evidence" value="ECO:0007669"/>
    <property type="project" value="TreeGrafter"/>
</dbReference>
<dbReference type="GO" id="GO:0046872">
    <property type="term" value="F:metal ion binding"/>
    <property type="evidence" value="ECO:0007669"/>
    <property type="project" value="UniProtKB-UniRule"/>
</dbReference>
<dbReference type="GO" id="GO:0015293">
    <property type="term" value="F:symporter activity"/>
    <property type="evidence" value="ECO:0007669"/>
    <property type="project" value="UniProtKB-UniRule"/>
</dbReference>
<dbReference type="GO" id="GO:0034755">
    <property type="term" value="P:iron ion transmembrane transport"/>
    <property type="evidence" value="ECO:0007669"/>
    <property type="project" value="TreeGrafter"/>
</dbReference>
<dbReference type="HAMAP" id="MF_00221">
    <property type="entry name" value="NRAMP"/>
    <property type="match status" value="1"/>
</dbReference>
<dbReference type="InterPro" id="IPR001046">
    <property type="entry name" value="NRAMP_fam"/>
</dbReference>
<dbReference type="NCBIfam" id="TIGR01197">
    <property type="entry name" value="nramp"/>
    <property type="match status" value="1"/>
</dbReference>
<dbReference type="NCBIfam" id="NF037982">
    <property type="entry name" value="Nramp_1"/>
    <property type="match status" value="1"/>
</dbReference>
<dbReference type="NCBIfam" id="NF001923">
    <property type="entry name" value="PRK00701.1"/>
    <property type="match status" value="1"/>
</dbReference>
<dbReference type="PANTHER" id="PTHR11706:SF33">
    <property type="entry name" value="NATURAL RESISTANCE-ASSOCIATED MACROPHAGE PROTEIN 2"/>
    <property type="match status" value="1"/>
</dbReference>
<dbReference type="PANTHER" id="PTHR11706">
    <property type="entry name" value="SOLUTE CARRIER PROTEIN FAMILY 11 MEMBER"/>
    <property type="match status" value="1"/>
</dbReference>
<dbReference type="Pfam" id="PF01566">
    <property type="entry name" value="Nramp"/>
    <property type="match status" value="1"/>
</dbReference>
<dbReference type="PRINTS" id="PR00447">
    <property type="entry name" value="NATRESASSCMP"/>
</dbReference>